<sequence>MNYSHDNWSAILAHIGKPEELDTSARNAGALTRRREIRDAATLLRLGLAYGPGGMSSLREVTAWAQLHDVATLSDVALLKRLRNAADWFGILAAQTLAVRAAVTGCTSGKRLRLVDGTAISAPGGGSAEWRLHMGYDPHTCQFTDFELTDSRDAERLDRFAQTADEIRIADRGFGSRPECIRSLAFGEADYIVRVHWRGLRWLTAEGMRFDMMGFLRGLDCGKNGETTVMIGNSGNKKAGAPFPARLIAVSLPPEKALISKTRLLSENRRKGRVVQAETLEAAGHVLLLTSLPEDEYSAEQVADCYRLRWQIELAFKRLKSLLHLDALRAKEPELAKAWIFANLLAAFLIDDIIQPSLDFPPRSAGSEKKN</sequence>
<keyword id="KW-0233">DNA recombination</keyword>
<keyword id="KW-0238">DNA-binding</keyword>
<keyword id="KW-0814">Transposable element</keyword>
<keyword id="KW-0815">Transposition</keyword>
<proteinExistence type="inferred from homology"/>
<accession>P11901</accession>
<reference key="1">
    <citation type="journal article" date="1989" name="FEBS Lett.">
        <title>IS421, a new insertion sequence in Escherichia coli.</title>
        <authorList>
            <person name="Sato S."/>
            <person name="Nakada Y."/>
            <person name="Shiratsuchi A."/>
        </authorList>
    </citation>
    <scope>NUCLEOTIDE SEQUENCE [GENOMIC DNA]</scope>
    <source>
        <strain>B</strain>
        <strain>C</strain>
    </source>
</reference>
<dbReference type="EMBL" id="Y07501">
    <property type="protein sequence ID" value="CAA68802.1"/>
    <property type="molecule type" value="Genomic_DNA"/>
</dbReference>
<dbReference type="PIR" id="S04880">
    <property type="entry name" value="S04880"/>
</dbReference>
<dbReference type="eggNOG" id="COG3385">
    <property type="taxonomic scope" value="Bacteria"/>
</dbReference>
<dbReference type="GO" id="GO:0003677">
    <property type="term" value="F:DNA binding"/>
    <property type="evidence" value="ECO:0007669"/>
    <property type="project" value="UniProtKB-KW"/>
</dbReference>
<dbReference type="GO" id="GO:0004803">
    <property type="term" value="F:transposase activity"/>
    <property type="evidence" value="ECO:0007669"/>
    <property type="project" value="InterPro"/>
</dbReference>
<dbReference type="GO" id="GO:0006313">
    <property type="term" value="P:DNA transposition"/>
    <property type="evidence" value="ECO:0007669"/>
    <property type="project" value="InterPro"/>
</dbReference>
<dbReference type="Gene3D" id="3.90.350.10">
    <property type="entry name" value="Transposase Inhibitor Protein From Tn5, Chain A, domain 1"/>
    <property type="match status" value="1"/>
</dbReference>
<dbReference type="InterPro" id="IPR012337">
    <property type="entry name" value="RNaseH-like_sf"/>
</dbReference>
<dbReference type="InterPro" id="IPR047952">
    <property type="entry name" value="Transpos_IS4"/>
</dbReference>
<dbReference type="InterPro" id="IPR002559">
    <property type="entry name" value="Transposase_11"/>
</dbReference>
<dbReference type="NCBIfam" id="NF033592">
    <property type="entry name" value="transpos_IS4_1"/>
    <property type="match status" value="1"/>
</dbReference>
<dbReference type="PANTHER" id="PTHR33258">
    <property type="entry name" value="TRANSPOSASE INSL FOR INSERTION SEQUENCE ELEMENT IS186A-RELATED"/>
    <property type="match status" value="1"/>
</dbReference>
<dbReference type="PANTHER" id="PTHR33258:SF1">
    <property type="entry name" value="TRANSPOSASE INSL FOR INSERTION SEQUENCE ELEMENT IS186A-RELATED"/>
    <property type="match status" value="1"/>
</dbReference>
<dbReference type="Pfam" id="PF01609">
    <property type="entry name" value="DDE_Tnp_1"/>
    <property type="match status" value="1"/>
</dbReference>
<dbReference type="SUPFAM" id="SSF53098">
    <property type="entry name" value="Ribonuclease H-like"/>
    <property type="match status" value="1"/>
</dbReference>
<feature type="chain" id="PRO_0000173295" description="Transposase for insertion sequence element IS421">
    <location>
        <begin position="1"/>
        <end position="371"/>
    </location>
</feature>
<organism>
    <name type="scientific">Escherichia coli</name>
    <dbReference type="NCBI Taxonomy" id="562"/>
    <lineage>
        <taxon>Bacteria</taxon>
        <taxon>Pseudomonadati</taxon>
        <taxon>Pseudomonadota</taxon>
        <taxon>Gammaproteobacteria</taxon>
        <taxon>Enterobacterales</taxon>
        <taxon>Enterobacteriaceae</taxon>
        <taxon>Escherichia</taxon>
    </lineage>
</organism>
<evidence type="ECO:0000305" key="1"/>
<protein>
    <recommendedName>
        <fullName>Transposase for insertion sequence element IS421</fullName>
    </recommendedName>
</protein>
<comment type="function">
    <text>Involved in the transposition of the insertion sequence IS421.</text>
</comment>
<comment type="similarity">
    <text evidence="1">Belongs to the transposase 11 family.</text>
</comment>
<name>T421_ECOLX</name>